<accession>O59291</accession>
<name>MVK_PYRHO</name>
<comment type="function">
    <text evidence="1">Catalyzes the phosphorylation of (R)-mevalonate (MVA) to (R)-mevalonate 5-phosphate (MVAP). Functions in the mevalonate (MVA) pathway leading to isopentenyl diphosphate (IPP), a key precursor for the biosynthesis of isoprenoid compounds such as archaeal membrane lipids.</text>
</comment>
<comment type="catalytic activity">
    <reaction evidence="1">
        <text>(R)-mevalonate + ATP = (R)-5-phosphomevalonate + ADP + H(+)</text>
        <dbReference type="Rhea" id="RHEA:17065"/>
        <dbReference type="ChEBI" id="CHEBI:15378"/>
        <dbReference type="ChEBI" id="CHEBI:30616"/>
        <dbReference type="ChEBI" id="CHEBI:36464"/>
        <dbReference type="ChEBI" id="CHEBI:58146"/>
        <dbReference type="ChEBI" id="CHEBI:456216"/>
        <dbReference type="EC" id="2.7.1.36"/>
    </reaction>
</comment>
<comment type="cofactor">
    <cofactor evidence="1">
        <name>Mg(2+)</name>
        <dbReference type="ChEBI" id="CHEBI:18420"/>
    </cofactor>
</comment>
<comment type="pathway">
    <text evidence="1">Isoprenoid biosynthesis; isopentenyl diphosphate biosynthesis via mevalonate pathway; isopentenyl diphosphate from (R)-mevalonate: step 1/3.</text>
</comment>
<comment type="subunit">
    <text evidence="1">Homodimer.</text>
</comment>
<comment type="subcellular location">
    <subcellularLocation>
        <location evidence="1">Cytoplasm</location>
    </subcellularLocation>
</comment>
<comment type="similarity">
    <text evidence="1">Belongs to the GHMP kinase family. Mevalonate kinase subfamily.</text>
</comment>
<dbReference type="EC" id="2.7.1.36" evidence="1"/>
<dbReference type="EMBL" id="BA000001">
    <property type="protein sequence ID" value="BAA30737.1"/>
    <property type="molecule type" value="Genomic_DNA"/>
</dbReference>
<dbReference type="PIR" id="A71042">
    <property type="entry name" value="A71042"/>
</dbReference>
<dbReference type="RefSeq" id="WP_010885698.1">
    <property type="nucleotide sequence ID" value="NC_000961.1"/>
</dbReference>
<dbReference type="SMR" id="O59291"/>
<dbReference type="STRING" id="70601.gene:9378615"/>
<dbReference type="EnsemblBacteria" id="BAA30737">
    <property type="protein sequence ID" value="BAA30737"/>
    <property type="gene ID" value="BAA30737"/>
</dbReference>
<dbReference type="GeneID" id="1442477"/>
<dbReference type="KEGG" id="pho:PH1625"/>
<dbReference type="eggNOG" id="arCOG01028">
    <property type="taxonomic scope" value="Archaea"/>
</dbReference>
<dbReference type="OrthoDB" id="19001at2157"/>
<dbReference type="UniPathway" id="UPA00057">
    <property type="reaction ID" value="UER00098"/>
</dbReference>
<dbReference type="Proteomes" id="UP000000752">
    <property type="component" value="Chromosome"/>
</dbReference>
<dbReference type="GO" id="GO:0005829">
    <property type="term" value="C:cytosol"/>
    <property type="evidence" value="ECO:0007669"/>
    <property type="project" value="TreeGrafter"/>
</dbReference>
<dbReference type="GO" id="GO:0005524">
    <property type="term" value="F:ATP binding"/>
    <property type="evidence" value="ECO:0007669"/>
    <property type="project" value="UniProtKB-UniRule"/>
</dbReference>
<dbReference type="GO" id="GO:0000287">
    <property type="term" value="F:magnesium ion binding"/>
    <property type="evidence" value="ECO:0007669"/>
    <property type="project" value="UniProtKB-UniRule"/>
</dbReference>
<dbReference type="GO" id="GO:0004496">
    <property type="term" value="F:mevalonate kinase activity"/>
    <property type="evidence" value="ECO:0007669"/>
    <property type="project" value="UniProtKB-UniRule"/>
</dbReference>
<dbReference type="GO" id="GO:0019287">
    <property type="term" value="P:isopentenyl diphosphate biosynthetic process, mevalonate pathway"/>
    <property type="evidence" value="ECO:0007669"/>
    <property type="project" value="UniProtKB-UniRule"/>
</dbReference>
<dbReference type="Gene3D" id="3.30.230.10">
    <property type="match status" value="1"/>
</dbReference>
<dbReference type="Gene3D" id="3.30.70.890">
    <property type="entry name" value="GHMP kinase, C-terminal domain"/>
    <property type="match status" value="1"/>
</dbReference>
<dbReference type="HAMAP" id="MF_00217">
    <property type="entry name" value="Mevalonate_kinase"/>
    <property type="match status" value="1"/>
</dbReference>
<dbReference type="InterPro" id="IPR013750">
    <property type="entry name" value="GHMP_kinase_C_dom"/>
</dbReference>
<dbReference type="InterPro" id="IPR036554">
    <property type="entry name" value="GHMP_kinase_C_sf"/>
</dbReference>
<dbReference type="InterPro" id="IPR006204">
    <property type="entry name" value="GHMP_kinase_N_dom"/>
</dbReference>
<dbReference type="InterPro" id="IPR006203">
    <property type="entry name" value="GHMP_knse_ATP-bd_CS"/>
</dbReference>
<dbReference type="InterPro" id="IPR006205">
    <property type="entry name" value="Mev_gal_kin"/>
</dbReference>
<dbReference type="InterPro" id="IPR022937">
    <property type="entry name" value="Mevalonate_kinase_arc"/>
</dbReference>
<dbReference type="InterPro" id="IPR020568">
    <property type="entry name" value="Ribosomal_Su5_D2-typ_SF"/>
</dbReference>
<dbReference type="InterPro" id="IPR014721">
    <property type="entry name" value="Ribsml_uS5_D2-typ_fold_subgr"/>
</dbReference>
<dbReference type="NCBIfam" id="TIGR00549">
    <property type="entry name" value="mevalon_kin"/>
    <property type="match status" value="1"/>
</dbReference>
<dbReference type="NCBIfam" id="NF003036">
    <property type="entry name" value="PRK03926.1"/>
    <property type="match status" value="1"/>
</dbReference>
<dbReference type="PANTHER" id="PTHR43290">
    <property type="entry name" value="MEVALONATE KINASE"/>
    <property type="match status" value="1"/>
</dbReference>
<dbReference type="PANTHER" id="PTHR43290:SF2">
    <property type="entry name" value="MEVALONATE KINASE"/>
    <property type="match status" value="1"/>
</dbReference>
<dbReference type="Pfam" id="PF08544">
    <property type="entry name" value="GHMP_kinases_C"/>
    <property type="match status" value="1"/>
</dbReference>
<dbReference type="Pfam" id="PF00288">
    <property type="entry name" value="GHMP_kinases_N"/>
    <property type="match status" value="1"/>
</dbReference>
<dbReference type="PRINTS" id="PR00959">
    <property type="entry name" value="MEVGALKINASE"/>
</dbReference>
<dbReference type="SUPFAM" id="SSF55060">
    <property type="entry name" value="GHMP Kinase, C-terminal domain"/>
    <property type="match status" value="1"/>
</dbReference>
<dbReference type="SUPFAM" id="SSF54211">
    <property type="entry name" value="Ribosomal protein S5 domain 2-like"/>
    <property type="match status" value="1"/>
</dbReference>
<dbReference type="PROSITE" id="PS00627">
    <property type="entry name" value="GHMP_KINASES_ATP"/>
    <property type="match status" value="1"/>
</dbReference>
<sequence>MVKYVLASAPAKVILFGEHSVVYGKPAIASAIELRTYVRAQFNDSGNIKIEAHDIKTPGLIVSFSEDKIYFETDYGKAAEVLSYVRYAIELALEESDKRVGIDVSITSQIPVGAGLGSSAAVAVATIGAVSRLLGLELSKEEIAKLGHKVELLVQGASSGIDPTVSAVGGFLYYKQGKFEPLPFMELPIVVGYTGSTGSTKELVAMVRKRYEEMPELVEPILEAMGKLVDKAKEIILSKLDEEEKLTKLGELMNINHGLLDALGVSTKKLGELVYAARTAGAIGAKLTGAGGGGCMYALAPGRQREVATAIKIAGGIPMITRVSREGLRIEEVSR</sequence>
<proteinExistence type="inferred from homology"/>
<evidence type="ECO:0000255" key="1">
    <source>
        <dbReference type="HAMAP-Rule" id="MF_00217"/>
    </source>
</evidence>
<keyword id="KW-0067">ATP-binding</keyword>
<keyword id="KW-0963">Cytoplasm</keyword>
<keyword id="KW-0414">Isoprene biosynthesis</keyword>
<keyword id="KW-0418">Kinase</keyword>
<keyword id="KW-0444">Lipid biosynthesis</keyword>
<keyword id="KW-0443">Lipid metabolism</keyword>
<keyword id="KW-0460">Magnesium</keyword>
<keyword id="KW-0547">Nucleotide-binding</keyword>
<keyword id="KW-0808">Transferase</keyword>
<gene>
    <name evidence="1" type="primary">mvk</name>
    <name type="ordered locus">PH1625</name>
</gene>
<protein>
    <recommendedName>
        <fullName evidence="1">Mevalonate kinase</fullName>
        <shortName evidence="1">MK</shortName>
        <shortName evidence="1">MVK</shortName>
        <ecNumber evidence="1">2.7.1.36</ecNumber>
    </recommendedName>
</protein>
<feature type="chain" id="PRO_0000156669" description="Mevalonate kinase">
    <location>
        <begin position="1"/>
        <end position="335"/>
    </location>
</feature>
<feature type="active site" description="Proton acceptor" evidence="1">
    <location>
        <position position="162"/>
    </location>
</feature>
<feature type="binding site" evidence="1">
    <location>
        <begin position="111"/>
        <end position="121"/>
    </location>
    <ligand>
        <name>ATP</name>
        <dbReference type="ChEBI" id="CHEBI:30616"/>
    </ligand>
</feature>
<organism>
    <name type="scientific">Pyrococcus horikoshii (strain ATCC 700860 / DSM 12428 / JCM 9974 / NBRC 100139 / OT-3)</name>
    <dbReference type="NCBI Taxonomy" id="70601"/>
    <lineage>
        <taxon>Archaea</taxon>
        <taxon>Methanobacteriati</taxon>
        <taxon>Methanobacteriota</taxon>
        <taxon>Thermococci</taxon>
        <taxon>Thermococcales</taxon>
        <taxon>Thermococcaceae</taxon>
        <taxon>Pyrococcus</taxon>
    </lineage>
</organism>
<reference key="1">
    <citation type="journal article" date="1998" name="DNA Res.">
        <title>Complete sequence and gene organization of the genome of a hyper-thermophilic archaebacterium, Pyrococcus horikoshii OT3.</title>
        <authorList>
            <person name="Kawarabayasi Y."/>
            <person name="Sawada M."/>
            <person name="Horikawa H."/>
            <person name="Haikawa Y."/>
            <person name="Hino Y."/>
            <person name="Yamamoto S."/>
            <person name="Sekine M."/>
            <person name="Baba S."/>
            <person name="Kosugi H."/>
            <person name="Hosoyama A."/>
            <person name="Nagai Y."/>
            <person name="Sakai M."/>
            <person name="Ogura K."/>
            <person name="Otsuka R."/>
            <person name="Nakazawa H."/>
            <person name="Takamiya M."/>
            <person name="Ohfuku Y."/>
            <person name="Funahashi T."/>
            <person name="Tanaka T."/>
            <person name="Kudoh Y."/>
            <person name="Yamazaki J."/>
            <person name="Kushida N."/>
            <person name="Oguchi A."/>
            <person name="Aoki K."/>
            <person name="Yoshizawa T."/>
            <person name="Nakamura Y."/>
            <person name="Robb F.T."/>
            <person name="Horikoshi K."/>
            <person name="Masuchi Y."/>
            <person name="Shizuya H."/>
            <person name="Kikuchi H."/>
        </authorList>
    </citation>
    <scope>NUCLEOTIDE SEQUENCE [LARGE SCALE GENOMIC DNA]</scope>
    <source>
        <strain>ATCC 700860 / DSM 12428 / JCM 9974 / NBRC 100139 / OT-3</strain>
    </source>
</reference>